<accession>A5D796</accession>
<gene>
    <name type="primary">VIPAS39</name>
    <name type="synonym">SPE39</name>
    <name type="synonym">VIPAR</name>
</gene>
<protein>
    <recommendedName>
        <fullName>Spermatogenesis-defective protein 39 homolog</fullName>
        <shortName>SPE-39</shortName>
    </recommendedName>
    <alternativeName>
        <fullName>VPS33B-interacting protein in apical-basolateral polarity regulator</fullName>
    </alternativeName>
    <alternativeName>
        <fullName>VPS33B-interacting protein in polarity and apical restriction</fullName>
    </alternativeName>
</protein>
<comment type="function">
    <text evidence="2 4">Proposed to be involved in endosomal maturation implicating in part VPS33B. In epithelial cells, the VPS33B:VIPAS39 complex may play a role in the apical RAB11A-dependent recycling pathway and in the maintenance of the apical-basolateral polarity. May play a role in lysosomal trafficking, probably via association with the core HOPS complex in a discrete population of endosomes; the functions seems to be independent of VPS33B. May play a role in vesicular trafficking during spermatogenesis. May be involved in direct or indirect transcriptional regulation of E-cadherin (By similarity).</text>
</comment>
<comment type="subunit">
    <text evidence="3 4">Interacts with VPS33B (By similarity). Associates with the homotypic fusion and vacuole protein sorting (HOPS) complex; impaired by VPS33B. Interacts with RAB11A (By similarity).</text>
</comment>
<comment type="subcellular location">
    <subcellularLocation>
        <location evidence="1">Cytoplasm</location>
    </subcellularLocation>
    <subcellularLocation>
        <location evidence="1">Cytoplasmic vesicle</location>
    </subcellularLocation>
    <subcellularLocation>
        <location evidence="4">Early endosome</location>
    </subcellularLocation>
    <subcellularLocation>
        <location evidence="4">Recycling endosome</location>
    </subcellularLocation>
    <subcellularLocation>
        <location evidence="4">Late endosome</location>
    </subcellularLocation>
    <text evidence="4">Colocalizes in clusters with VPS33B at cytoplasmic organelles.</text>
</comment>
<comment type="similarity">
    <text evidence="6">Belongs to the VIPAS39 family.</text>
</comment>
<sequence length="481" mass="55615">MNRTKGDEEEYWNSSKFKAFTFDDEDDELSQLKESKRAVNSLRDFVDDDDEDDLERVSWTGEPVGSISWSIKETAGNSGSSHEREQLKNRNSFSTYAQLPKPASTYSLSSFFRGRTRPGSFQSLSDALSDTPAKSYAPELGRPKGEYRDYSNDWSPSDTVRRLRKGKDKIQLLEEAVSMHDGNVITAVLIFLKRTLSKEILFRELEVRQVALRHLIHFLKEIGDQKLLLDLFRFLDRTEELALSHYREHLNIQDPEKRKEFLKTCIGLPFSAEDSAHIQDHYTLLERQIIIEANDRHLELAGQTEVFRKHPRKASILNMPLVTTLFYSCFYHYTEAEGTFSSPVNLKKTFKIPDKQYVLTALAARAKLRAWHDVDALFTTKNWLGYTKKRAPIGFHRVVEILHKNSAPVQVLQEYVNLVEDVDTKLNLATKFKCHDVVIDTCRDLKDRQQLLAYRSKVDKGSAEEEKIDALLNSSQIRWKN</sequence>
<reference key="1">
    <citation type="submission" date="2007-04" db="EMBL/GenBank/DDBJ databases">
        <authorList>
            <consortium name="NIH - Mammalian Gene Collection (MGC) project"/>
        </authorList>
    </citation>
    <scope>NUCLEOTIDE SEQUENCE [LARGE SCALE MRNA]</scope>
    <source>
        <strain>Hereford</strain>
        <tissue>Ascending colon</tissue>
    </source>
</reference>
<keyword id="KW-0963">Cytoplasm</keyword>
<keyword id="KW-0968">Cytoplasmic vesicle</keyword>
<keyword id="KW-0221">Differentiation</keyword>
<keyword id="KW-0967">Endosome</keyword>
<keyword id="KW-0597">Phosphoprotein</keyword>
<keyword id="KW-0653">Protein transport</keyword>
<keyword id="KW-1185">Reference proteome</keyword>
<keyword id="KW-0744">Spermatogenesis</keyword>
<keyword id="KW-0804">Transcription</keyword>
<keyword id="KW-0805">Transcription regulation</keyword>
<keyword id="KW-0813">Transport</keyword>
<dbReference type="EMBL" id="BC140476">
    <property type="protein sequence ID" value="AAI40477.1"/>
    <property type="molecule type" value="mRNA"/>
</dbReference>
<dbReference type="RefSeq" id="NP_001091469.1">
    <property type="nucleotide sequence ID" value="NM_001098000.1"/>
</dbReference>
<dbReference type="SMR" id="A5D796"/>
<dbReference type="FunCoup" id="A5D796">
    <property type="interactions" value="5454"/>
</dbReference>
<dbReference type="STRING" id="9913.ENSBTAP00000027283"/>
<dbReference type="PaxDb" id="9913-ENSBTAP00000027283"/>
<dbReference type="GeneID" id="508872"/>
<dbReference type="KEGG" id="bta:508872"/>
<dbReference type="CTD" id="63894"/>
<dbReference type="VEuPathDB" id="HostDB:ENSBTAG00000020475"/>
<dbReference type="eggNOG" id="KOG4677">
    <property type="taxonomic scope" value="Eukaryota"/>
</dbReference>
<dbReference type="HOGENOM" id="CLU_029487_0_0_1"/>
<dbReference type="InParanoid" id="A5D796"/>
<dbReference type="OMA" id="PEMVIEC"/>
<dbReference type="OrthoDB" id="9977282at2759"/>
<dbReference type="TreeFam" id="TF319640"/>
<dbReference type="Proteomes" id="UP000009136">
    <property type="component" value="Chromosome 10"/>
</dbReference>
<dbReference type="Bgee" id="ENSBTAG00000020475">
    <property type="expression patterns" value="Expressed in trachea and 108 other cell types or tissues"/>
</dbReference>
<dbReference type="GO" id="GO:0005737">
    <property type="term" value="C:cytoplasm"/>
    <property type="evidence" value="ECO:0000250"/>
    <property type="project" value="UniProtKB"/>
</dbReference>
<dbReference type="GO" id="GO:0005769">
    <property type="term" value="C:early endosome"/>
    <property type="evidence" value="ECO:0000250"/>
    <property type="project" value="UniProtKB"/>
</dbReference>
<dbReference type="GO" id="GO:0005770">
    <property type="term" value="C:late endosome"/>
    <property type="evidence" value="ECO:0000250"/>
    <property type="project" value="UniProtKB"/>
</dbReference>
<dbReference type="GO" id="GO:0055037">
    <property type="term" value="C:recycling endosome"/>
    <property type="evidence" value="ECO:0000250"/>
    <property type="project" value="UniProtKB"/>
</dbReference>
<dbReference type="GO" id="GO:0099023">
    <property type="term" value="C:vesicle tethering complex"/>
    <property type="evidence" value="ECO:0007669"/>
    <property type="project" value="UniProtKB-ARBA"/>
</dbReference>
<dbReference type="GO" id="GO:0044877">
    <property type="term" value="F:protein-containing complex binding"/>
    <property type="evidence" value="ECO:0000250"/>
    <property type="project" value="UniProtKB"/>
</dbReference>
<dbReference type="GO" id="GO:0030154">
    <property type="term" value="P:cell differentiation"/>
    <property type="evidence" value="ECO:0007669"/>
    <property type="project" value="UniProtKB-KW"/>
</dbReference>
<dbReference type="GO" id="GO:0008333">
    <property type="term" value="P:endosome to lysosome transport"/>
    <property type="evidence" value="ECO:0000250"/>
    <property type="project" value="UniProtKB"/>
</dbReference>
<dbReference type="GO" id="GO:0006886">
    <property type="term" value="P:intracellular protein transport"/>
    <property type="evidence" value="ECO:0000250"/>
    <property type="project" value="UniProtKB"/>
</dbReference>
<dbReference type="GO" id="GO:0007283">
    <property type="term" value="P:spermatogenesis"/>
    <property type="evidence" value="ECO:0007669"/>
    <property type="project" value="UniProtKB-KW"/>
</dbReference>
<dbReference type="GO" id="GO:0007034">
    <property type="term" value="P:vacuolar transport"/>
    <property type="evidence" value="ECO:0000318"/>
    <property type="project" value="GO_Central"/>
</dbReference>
<dbReference type="Gene3D" id="1.10.150.780">
    <property type="entry name" value="Vps16, C-terminal region"/>
    <property type="match status" value="1"/>
</dbReference>
<dbReference type="InterPro" id="IPR040057">
    <property type="entry name" value="Spe-39"/>
</dbReference>
<dbReference type="InterPro" id="IPR006925">
    <property type="entry name" value="Vps16_C"/>
</dbReference>
<dbReference type="InterPro" id="IPR038132">
    <property type="entry name" value="Vps16_C_sf"/>
</dbReference>
<dbReference type="PANTHER" id="PTHR13364">
    <property type="entry name" value="DEFECTIVE SPERMATOGENESIS PROTEIN 39"/>
    <property type="match status" value="1"/>
</dbReference>
<dbReference type="PANTHER" id="PTHR13364:SF6">
    <property type="entry name" value="SPERMATOGENESIS-DEFECTIVE PROTEIN 39 HOMOLOG"/>
    <property type="match status" value="1"/>
</dbReference>
<dbReference type="Pfam" id="PF04840">
    <property type="entry name" value="Vps16_C"/>
    <property type="match status" value="1"/>
</dbReference>
<proteinExistence type="evidence at transcript level"/>
<name>SPE39_BOVIN</name>
<organism>
    <name type="scientific">Bos taurus</name>
    <name type="common">Bovine</name>
    <dbReference type="NCBI Taxonomy" id="9913"/>
    <lineage>
        <taxon>Eukaryota</taxon>
        <taxon>Metazoa</taxon>
        <taxon>Chordata</taxon>
        <taxon>Craniata</taxon>
        <taxon>Vertebrata</taxon>
        <taxon>Euteleostomi</taxon>
        <taxon>Mammalia</taxon>
        <taxon>Eutheria</taxon>
        <taxon>Laurasiatheria</taxon>
        <taxon>Artiodactyla</taxon>
        <taxon>Ruminantia</taxon>
        <taxon>Pecora</taxon>
        <taxon>Bovidae</taxon>
        <taxon>Bovinae</taxon>
        <taxon>Bos</taxon>
    </lineage>
</organism>
<feature type="chain" id="PRO_0000395738" description="Spermatogenesis-defective protein 39 homolog">
    <location>
        <begin position="1"/>
        <end position="481"/>
    </location>
</feature>
<feature type="region of interest" description="Disordered" evidence="5">
    <location>
        <begin position="122"/>
        <end position="155"/>
    </location>
</feature>
<feature type="compositionally biased region" description="Basic and acidic residues" evidence="5">
    <location>
        <begin position="141"/>
        <end position="151"/>
    </location>
</feature>
<feature type="modified residue" description="Phosphothreonine" evidence="4">
    <location>
        <position position="21"/>
    </location>
</feature>
<feature type="modified residue" description="Phosphothreonine" evidence="3">
    <location>
        <position position="116"/>
    </location>
</feature>
<feature type="modified residue" description="Phosphoserine" evidence="4">
    <location>
        <position position="120"/>
    </location>
</feature>
<feature type="modified residue" description="Phosphoserine" evidence="4">
    <location>
        <position position="123"/>
    </location>
</feature>
<feature type="modified residue" description="Phosphoserine" evidence="4">
    <location>
        <position position="129"/>
    </location>
</feature>
<feature type="modified residue" description="Phosphothreonine" evidence="4">
    <location>
        <position position="131"/>
    </location>
</feature>
<evidence type="ECO:0000250" key="1"/>
<evidence type="ECO:0000250" key="2">
    <source>
        <dbReference type="UniProtKB" id="Q23288"/>
    </source>
</evidence>
<evidence type="ECO:0000250" key="3">
    <source>
        <dbReference type="UniProtKB" id="Q8BGQ1"/>
    </source>
</evidence>
<evidence type="ECO:0000250" key="4">
    <source>
        <dbReference type="UniProtKB" id="Q9H9C1"/>
    </source>
</evidence>
<evidence type="ECO:0000256" key="5">
    <source>
        <dbReference type="SAM" id="MobiDB-lite"/>
    </source>
</evidence>
<evidence type="ECO:0000305" key="6"/>